<organism>
    <name type="scientific">Penaeus setiferus</name>
    <name type="common">Atlantic white shrimp</name>
    <name type="synonym">Litopenaeus setiferus</name>
    <dbReference type="NCBI Taxonomy" id="64468"/>
    <lineage>
        <taxon>Eukaryota</taxon>
        <taxon>Metazoa</taxon>
        <taxon>Ecdysozoa</taxon>
        <taxon>Arthropoda</taxon>
        <taxon>Crustacea</taxon>
        <taxon>Multicrustacea</taxon>
        <taxon>Malacostraca</taxon>
        <taxon>Eumalacostraca</taxon>
        <taxon>Eucarida</taxon>
        <taxon>Decapoda</taxon>
        <taxon>Dendrobranchiata</taxon>
        <taxon>Penaeoidea</taxon>
        <taxon>Penaeidae</taxon>
        <taxon>Penaeus</taxon>
    </lineage>
</organism>
<protein>
    <recommendedName>
        <fullName>Penaeidin-3l</fullName>
        <shortName>Pen-3l</shortName>
    </recommendedName>
</protein>
<proteinExistence type="inferred from homology"/>
<feature type="signal peptide" evidence="2">
    <location>
        <begin position="1"/>
        <end position="19"/>
    </location>
</feature>
<feature type="chain" id="PRO_0000023517" description="Penaeidin-3l">
    <location>
        <begin position="20"/>
        <end position="74"/>
    </location>
</feature>
<feature type="modified residue" description="Pyrrolidone carboxylic acid" evidence="1">
    <location>
        <position position="20"/>
    </location>
</feature>
<feature type="modified residue" description="Serine amide" evidence="1">
    <location>
        <position position="74"/>
    </location>
</feature>
<feature type="disulfide bond" evidence="1">
    <location>
        <begin position="44"/>
        <end position="59"/>
    </location>
</feature>
<feature type="disulfide bond" evidence="1">
    <location>
        <begin position="48"/>
        <end position="66"/>
    </location>
</feature>
<feature type="disulfide bond" evidence="1">
    <location>
        <begin position="60"/>
        <end position="67"/>
    </location>
</feature>
<dbReference type="EMBL" id="AY039206">
    <property type="protein sequence ID" value="AAK83454.1"/>
    <property type="molecule type" value="mRNA"/>
</dbReference>
<dbReference type="SMR" id="Q962A8"/>
<dbReference type="GO" id="GO:0005737">
    <property type="term" value="C:cytoplasm"/>
    <property type="evidence" value="ECO:0007669"/>
    <property type="project" value="InterPro"/>
</dbReference>
<dbReference type="GO" id="GO:0008061">
    <property type="term" value="F:chitin binding"/>
    <property type="evidence" value="ECO:0007669"/>
    <property type="project" value="UniProtKB-KW"/>
</dbReference>
<dbReference type="GO" id="GO:0042742">
    <property type="term" value="P:defense response to bacterium"/>
    <property type="evidence" value="ECO:0007669"/>
    <property type="project" value="UniProtKB-KW"/>
</dbReference>
<dbReference type="GO" id="GO:0050832">
    <property type="term" value="P:defense response to fungus"/>
    <property type="evidence" value="ECO:0007669"/>
    <property type="project" value="UniProtKB-KW"/>
</dbReference>
<dbReference type="GO" id="GO:0031640">
    <property type="term" value="P:killing of cells of another organism"/>
    <property type="evidence" value="ECO:0007669"/>
    <property type="project" value="UniProtKB-KW"/>
</dbReference>
<dbReference type="InterPro" id="IPR009226">
    <property type="entry name" value="Penaeidin"/>
</dbReference>
<dbReference type="Pfam" id="PF05927">
    <property type="entry name" value="Penaeidin"/>
    <property type="match status" value="1"/>
</dbReference>
<name>PEN3L_PENST</name>
<sequence>MRLVVCLVFLASFALVCQGQGYKGPYTRPILRPYVRPVVSYNVCTLSCRGITTTQARSCCTRLGRCCHVAKGYSG</sequence>
<reference key="1">
    <citation type="journal article" date="2002" name="Immunogenetics">
        <title>Diversity of the penaeidin antimicrobial peptides in two shrimp species.</title>
        <authorList>
            <person name="Cuthbertson B.J."/>
            <person name="Shepard E.F."/>
            <person name="Chapman R.W."/>
            <person name="Gross P.S."/>
        </authorList>
    </citation>
    <scope>NUCLEOTIDE SEQUENCE [MRNA]</scope>
    <source>
        <tissue>Hemocyte</tissue>
    </source>
</reference>
<accession>Q962A8</accession>
<evidence type="ECO:0000250" key="1"/>
<evidence type="ECO:0000255" key="2"/>
<evidence type="ECO:0000305" key="3"/>
<keyword id="KW-0027">Amidation</keyword>
<keyword id="KW-0044">Antibiotic</keyword>
<keyword id="KW-0929">Antimicrobial</keyword>
<keyword id="KW-0147">Chitin-binding</keyword>
<keyword id="KW-1015">Disulfide bond</keyword>
<keyword id="KW-0295">Fungicide</keyword>
<keyword id="KW-0873">Pyrrolidone carboxylic acid</keyword>
<keyword id="KW-0732">Signal</keyword>
<comment type="function">
    <text evidence="1">Antibacterial and antifungal activity. Presents chitin-binding activity (By similarity).</text>
</comment>
<comment type="subcellular location">
    <subcellularLocation>
        <location>Cytoplasmic granule</location>
    </subcellularLocation>
    <text>Cytoplasmic granules of hemocytes and to a lesser extent in small granules of hemocytes.</text>
</comment>
<comment type="similarity">
    <text evidence="3">Belongs to the penaeidin family.</text>
</comment>